<sequence length="347" mass="38486">MVCALGIEGSANKIGIGIIRDGKVLANVRRTYITPPGEGFLPKETAKHHREAILGLVESSLKEAQLKSSDLDVICYTKGPGMAPPLLVGAIVARTLSLLWNIPLLGVNHCIGHIEMGRLITGAQNPTVLYVSGGNTQVIAYSNKRYRIFGETIDIAVGNCLDRFARIIKLSNDPSPGYNIEQLAKSSNRYIKLPYVVKGMDVSFSGILSYIEDLAEPGKRQNKRKKPQEEEVNNYSQADLCYSLQETIFAMLVEITERAMAHCGSNEVLIVGGVGCNERLQEMMRIMCEERGGKLFATDERYCIDNGLMIAHAGAEMFRSGTRMPFEESYVTQRFRTDEVLVSWRDD</sequence>
<accession>Q9VV41</accession>
<feature type="chain" id="PRO_0000307784" description="Probable tRNA N6-adenosine threonylcarbamoyltransferase">
    <location>
        <begin position="1"/>
        <end position="347"/>
    </location>
</feature>
<feature type="binding site" evidence="1">
    <location>
        <position position="109"/>
    </location>
    <ligand>
        <name>a divalent metal cation</name>
        <dbReference type="ChEBI" id="CHEBI:60240"/>
    </ligand>
</feature>
<feature type="binding site" evidence="1">
    <location>
        <position position="113"/>
    </location>
    <ligand>
        <name>a divalent metal cation</name>
        <dbReference type="ChEBI" id="CHEBI:60240"/>
    </ligand>
</feature>
<feature type="binding site" evidence="1">
    <location>
        <begin position="130"/>
        <end position="134"/>
    </location>
    <ligand>
        <name>substrate</name>
    </ligand>
</feature>
<feature type="binding site" evidence="1">
    <location>
        <position position="130"/>
    </location>
    <ligand>
        <name>a divalent metal cation</name>
        <dbReference type="ChEBI" id="CHEBI:60240"/>
    </ligand>
</feature>
<feature type="binding site" evidence="1">
    <location>
        <position position="162"/>
    </location>
    <ligand>
        <name>substrate</name>
    </ligand>
</feature>
<feature type="binding site" evidence="1">
    <location>
        <position position="177"/>
    </location>
    <ligand>
        <name>substrate</name>
    </ligand>
</feature>
<feature type="binding site" evidence="1">
    <location>
        <position position="181"/>
    </location>
    <ligand>
        <name>substrate</name>
    </ligand>
</feature>
<feature type="binding site" evidence="1">
    <location>
        <position position="277"/>
    </location>
    <ligand>
        <name>substrate</name>
    </ligand>
</feature>
<feature type="binding site" evidence="1">
    <location>
        <position position="305"/>
    </location>
    <ligand>
        <name>a divalent metal cation</name>
        <dbReference type="ChEBI" id="CHEBI:60240"/>
    </ligand>
</feature>
<reference key="1">
    <citation type="journal article" date="2000" name="Science">
        <title>The genome sequence of Drosophila melanogaster.</title>
        <authorList>
            <person name="Adams M.D."/>
            <person name="Celniker S.E."/>
            <person name="Holt R.A."/>
            <person name="Evans C.A."/>
            <person name="Gocayne J.D."/>
            <person name="Amanatides P.G."/>
            <person name="Scherer S.E."/>
            <person name="Li P.W."/>
            <person name="Hoskins R.A."/>
            <person name="Galle R.F."/>
            <person name="George R.A."/>
            <person name="Lewis S.E."/>
            <person name="Richards S."/>
            <person name="Ashburner M."/>
            <person name="Henderson S.N."/>
            <person name="Sutton G.G."/>
            <person name="Wortman J.R."/>
            <person name="Yandell M.D."/>
            <person name="Zhang Q."/>
            <person name="Chen L.X."/>
            <person name="Brandon R.C."/>
            <person name="Rogers Y.-H.C."/>
            <person name="Blazej R.G."/>
            <person name="Champe M."/>
            <person name="Pfeiffer B.D."/>
            <person name="Wan K.H."/>
            <person name="Doyle C."/>
            <person name="Baxter E.G."/>
            <person name="Helt G."/>
            <person name="Nelson C.R."/>
            <person name="Miklos G.L.G."/>
            <person name="Abril J.F."/>
            <person name="Agbayani A."/>
            <person name="An H.-J."/>
            <person name="Andrews-Pfannkoch C."/>
            <person name="Baldwin D."/>
            <person name="Ballew R.M."/>
            <person name="Basu A."/>
            <person name="Baxendale J."/>
            <person name="Bayraktaroglu L."/>
            <person name="Beasley E.M."/>
            <person name="Beeson K.Y."/>
            <person name="Benos P.V."/>
            <person name="Berman B.P."/>
            <person name="Bhandari D."/>
            <person name="Bolshakov S."/>
            <person name="Borkova D."/>
            <person name="Botchan M.R."/>
            <person name="Bouck J."/>
            <person name="Brokstein P."/>
            <person name="Brottier P."/>
            <person name="Burtis K.C."/>
            <person name="Busam D.A."/>
            <person name="Butler H."/>
            <person name="Cadieu E."/>
            <person name="Center A."/>
            <person name="Chandra I."/>
            <person name="Cherry J.M."/>
            <person name="Cawley S."/>
            <person name="Dahlke C."/>
            <person name="Davenport L.B."/>
            <person name="Davies P."/>
            <person name="de Pablos B."/>
            <person name="Delcher A."/>
            <person name="Deng Z."/>
            <person name="Mays A.D."/>
            <person name="Dew I."/>
            <person name="Dietz S.M."/>
            <person name="Dodson K."/>
            <person name="Doup L.E."/>
            <person name="Downes M."/>
            <person name="Dugan-Rocha S."/>
            <person name="Dunkov B.C."/>
            <person name="Dunn P."/>
            <person name="Durbin K.J."/>
            <person name="Evangelista C.C."/>
            <person name="Ferraz C."/>
            <person name="Ferriera S."/>
            <person name="Fleischmann W."/>
            <person name="Fosler C."/>
            <person name="Gabrielian A.E."/>
            <person name="Garg N.S."/>
            <person name="Gelbart W.M."/>
            <person name="Glasser K."/>
            <person name="Glodek A."/>
            <person name="Gong F."/>
            <person name="Gorrell J.H."/>
            <person name="Gu Z."/>
            <person name="Guan P."/>
            <person name="Harris M."/>
            <person name="Harris N.L."/>
            <person name="Harvey D.A."/>
            <person name="Heiman T.J."/>
            <person name="Hernandez J.R."/>
            <person name="Houck J."/>
            <person name="Hostin D."/>
            <person name="Houston K.A."/>
            <person name="Howland T.J."/>
            <person name="Wei M.-H."/>
            <person name="Ibegwam C."/>
            <person name="Jalali M."/>
            <person name="Kalush F."/>
            <person name="Karpen G.H."/>
            <person name="Ke Z."/>
            <person name="Kennison J.A."/>
            <person name="Ketchum K.A."/>
            <person name="Kimmel B.E."/>
            <person name="Kodira C.D."/>
            <person name="Kraft C.L."/>
            <person name="Kravitz S."/>
            <person name="Kulp D."/>
            <person name="Lai Z."/>
            <person name="Lasko P."/>
            <person name="Lei Y."/>
            <person name="Levitsky A.A."/>
            <person name="Li J.H."/>
            <person name="Li Z."/>
            <person name="Liang Y."/>
            <person name="Lin X."/>
            <person name="Liu X."/>
            <person name="Mattei B."/>
            <person name="McIntosh T.C."/>
            <person name="McLeod M.P."/>
            <person name="McPherson D."/>
            <person name="Merkulov G."/>
            <person name="Milshina N.V."/>
            <person name="Mobarry C."/>
            <person name="Morris J."/>
            <person name="Moshrefi A."/>
            <person name="Mount S.M."/>
            <person name="Moy M."/>
            <person name="Murphy B."/>
            <person name="Murphy L."/>
            <person name="Muzny D.M."/>
            <person name="Nelson D.L."/>
            <person name="Nelson D.R."/>
            <person name="Nelson K.A."/>
            <person name="Nixon K."/>
            <person name="Nusskern D.R."/>
            <person name="Pacleb J.M."/>
            <person name="Palazzolo M."/>
            <person name="Pittman G.S."/>
            <person name="Pan S."/>
            <person name="Pollard J."/>
            <person name="Puri V."/>
            <person name="Reese M.G."/>
            <person name="Reinert K."/>
            <person name="Remington K."/>
            <person name="Saunders R.D.C."/>
            <person name="Scheeler F."/>
            <person name="Shen H."/>
            <person name="Shue B.C."/>
            <person name="Siden-Kiamos I."/>
            <person name="Simpson M."/>
            <person name="Skupski M.P."/>
            <person name="Smith T.J."/>
            <person name="Spier E."/>
            <person name="Spradling A.C."/>
            <person name="Stapleton M."/>
            <person name="Strong R."/>
            <person name="Sun E."/>
            <person name="Svirskas R."/>
            <person name="Tector C."/>
            <person name="Turner R."/>
            <person name="Venter E."/>
            <person name="Wang A.H."/>
            <person name="Wang X."/>
            <person name="Wang Z.-Y."/>
            <person name="Wassarman D.A."/>
            <person name="Weinstock G.M."/>
            <person name="Weissenbach J."/>
            <person name="Williams S.M."/>
            <person name="Woodage T."/>
            <person name="Worley K.C."/>
            <person name="Wu D."/>
            <person name="Yang S."/>
            <person name="Yao Q.A."/>
            <person name="Ye J."/>
            <person name="Yeh R.-F."/>
            <person name="Zaveri J.S."/>
            <person name="Zhan M."/>
            <person name="Zhang G."/>
            <person name="Zhao Q."/>
            <person name="Zheng L."/>
            <person name="Zheng X.H."/>
            <person name="Zhong F.N."/>
            <person name="Zhong W."/>
            <person name="Zhou X."/>
            <person name="Zhu S.C."/>
            <person name="Zhu X."/>
            <person name="Smith H.O."/>
            <person name="Gibbs R.A."/>
            <person name="Myers E.W."/>
            <person name="Rubin G.M."/>
            <person name="Venter J.C."/>
        </authorList>
    </citation>
    <scope>NUCLEOTIDE SEQUENCE [LARGE SCALE GENOMIC DNA]</scope>
    <source>
        <strain>Berkeley</strain>
    </source>
</reference>
<reference key="2">
    <citation type="journal article" date="2002" name="Genome Biol.">
        <title>Annotation of the Drosophila melanogaster euchromatic genome: a systematic review.</title>
        <authorList>
            <person name="Misra S."/>
            <person name="Crosby M.A."/>
            <person name="Mungall C.J."/>
            <person name="Matthews B.B."/>
            <person name="Campbell K.S."/>
            <person name="Hradecky P."/>
            <person name="Huang Y."/>
            <person name="Kaminker J.S."/>
            <person name="Millburn G.H."/>
            <person name="Prochnik S.E."/>
            <person name="Smith C.D."/>
            <person name="Tupy J.L."/>
            <person name="Whitfield E.J."/>
            <person name="Bayraktaroglu L."/>
            <person name="Berman B.P."/>
            <person name="Bettencourt B.R."/>
            <person name="Celniker S.E."/>
            <person name="de Grey A.D.N.J."/>
            <person name="Drysdale R.A."/>
            <person name="Harris N.L."/>
            <person name="Richter J."/>
            <person name="Russo S."/>
            <person name="Schroeder A.J."/>
            <person name="Shu S.Q."/>
            <person name="Stapleton M."/>
            <person name="Yamada C."/>
            <person name="Ashburner M."/>
            <person name="Gelbart W.M."/>
            <person name="Rubin G.M."/>
            <person name="Lewis S.E."/>
        </authorList>
    </citation>
    <scope>GENOME REANNOTATION</scope>
    <source>
        <strain>Berkeley</strain>
    </source>
</reference>
<reference key="3">
    <citation type="journal article" date="2002" name="Genome Biol.">
        <title>A Drosophila full-length cDNA resource.</title>
        <authorList>
            <person name="Stapleton M."/>
            <person name="Carlson J.W."/>
            <person name="Brokstein P."/>
            <person name="Yu C."/>
            <person name="Champe M."/>
            <person name="George R.A."/>
            <person name="Guarin H."/>
            <person name="Kronmiller B."/>
            <person name="Pacleb J.M."/>
            <person name="Park S."/>
            <person name="Wan K.H."/>
            <person name="Rubin G.M."/>
            <person name="Celniker S.E."/>
        </authorList>
    </citation>
    <scope>NUCLEOTIDE SEQUENCE [LARGE SCALE MRNA]</scope>
    <source>
        <strain>Berkeley</strain>
        <tissue>Embryo</tissue>
    </source>
</reference>
<organism>
    <name type="scientific">Drosophila melanogaster</name>
    <name type="common">Fruit fly</name>
    <dbReference type="NCBI Taxonomy" id="7227"/>
    <lineage>
        <taxon>Eukaryota</taxon>
        <taxon>Metazoa</taxon>
        <taxon>Ecdysozoa</taxon>
        <taxon>Arthropoda</taxon>
        <taxon>Hexapoda</taxon>
        <taxon>Insecta</taxon>
        <taxon>Pterygota</taxon>
        <taxon>Neoptera</taxon>
        <taxon>Endopterygota</taxon>
        <taxon>Diptera</taxon>
        <taxon>Brachycera</taxon>
        <taxon>Muscomorpha</taxon>
        <taxon>Ephydroidea</taxon>
        <taxon>Drosophilidae</taxon>
        <taxon>Drosophila</taxon>
        <taxon>Sophophora</taxon>
    </lineage>
</organism>
<dbReference type="EC" id="2.3.1.234" evidence="1"/>
<dbReference type="EMBL" id="AE014296">
    <property type="protein sequence ID" value="AAF49481.1"/>
    <property type="molecule type" value="Genomic_DNA"/>
</dbReference>
<dbReference type="EMBL" id="AY094853">
    <property type="protein sequence ID" value="AAM11206.1"/>
    <property type="molecule type" value="mRNA"/>
</dbReference>
<dbReference type="RefSeq" id="NP_648880.1">
    <property type="nucleotide sequence ID" value="NM_140623.4"/>
</dbReference>
<dbReference type="SMR" id="Q9VV41"/>
<dbReference type="BioGRID" id="65118">
    <property type="interactions" value="8"/>
</dbReference>
<dbReference type="ComplexPortal" id="CPX-2246">
    <property type="entry name" value="KEOPS tRNA N6-adenosine threonylcarbamoyltransferase complex"/>
</dbReference>
<dbReference type="FunCoup" id="Q9VV41">
    <property type="interactions" value="697"/>
</dbReference>
<dbReference type="IntAct" id="Q9VV41">
    <property type="interactions" value="4"/>
</dbReference>
<dbReference type="STRING" id="7227.FBpp0075139"/>
<dbReference type="GlyGen" id="Q9VV41">
    <property type="glycosylation" value="1 site"/>
</dbReference>
<dbReference type="PaxDb" id="7227-FBpp0075139"/>
<dbReference type="DNASU" id="39811"/>
<dbReference type="EnsemblMetazoa" id="FBtr0075381">
    <property type="protein sequence ID" value="FBpp0075139"/>
    <property type="gene ID" value="FBgn0283681"/>
</dbReference>
<dbReference type="GeneID" id="39811"/>
<dbReference type="KEGG" id="dme:Dmel_CG4933"/>
<dbReference type="UCSC" id="CG4933-RA">
    <property type="organism name" value="d. melanogaster"/>
</dbReference>
<dbReference type="AGR" id="FB:FBgn0283681"/>
<dbReference type="CTD" id="39811"/>
<dbReference type="FlyBase" id="FBgn0283681">
    <property type="gene designation" value="Tcs3"/>
</dbReference>
<dbReference type="VEuPathDB" id="VectorBase:FBgn0283681"/>
<dbReference type="eggNOG" id="KOG2708">
    <property type="taxonomic scope" value="Eukaryota"/>
</dbReference>
<dbReference type="GeneTree" id="ENSGT00940000153744"/>
<dbReference type="HOGENOM" id="CLU_023208_2_2_1"/>
<dbReference type="InParanoid" id="Q9VV41"/>
<dbReference type="OMA" id="HHRSWVV"/>
<dbReference type="OrthoDB" id="10254073at2759"/>
<dbReference type="PhylomeDB" id="Q9VV41"/>
<dbReference type="GenomeRNAi" id="39811"/>
<dbReference type="PRO" id="PR:Q9VV41"/>
<dbReference type="Proteomes" id="UP000000803">
    <property type="component" value="Chromosome 3L"/>
</dbReference>
<dbReference type="Bgee" id="FBgn0283681">
    <property type="expression patterns" value="Expressed in adult middle midgut class I enteroendocrine cell in adult midgut (Drosophila) and 35 other cell types or tissues"/>
</dbReference>
<dbReference type="GO" id="GO:0005737">
    <property type="term" value="C:cytoplasm"/>
    <property type="evidence" value="ECO:0000318"/>
    <property type="project" value="GO_Central"/>
</dbReference>
<dbReference type="GO" id="GO:0000408">
    <property type="term" value="C:EKC/KEOPS complex"/>
    <property type="evidence" value="ECO:0000318"/>
    <property type="project" value="GO_Central"/>
</dbReference>
<dbReference type="GO" id="GO:0005634">
    <property type="term" value="C:nucleus"/>
    <property type="evidence" value="ECO:0007669"/>
    <property type="project" value="UniProtKB-SubCell"/>
</dbReference>
<dbReference type="GO" id="GO:0046872">
    <property type="term" value="F:metal ion binding"/>
    <property type="evidence" value="ECO:0007669"/>
    <property type="project" value="UniProtKB-KW"/>
</dbReference>
<dbReference type="GO" id="GO:0061711">
    <property type="term" value="F:N(6)-L-threonylcarbamoyladenine synthase activity"/>
    <property type="evidence" value="ECO:0000250"/>
    <property type="project" value="FlyBase"/>
</dbReference>
<dbReference type="GO" id="GO:0045948">
    <property type="term" value="P:positive regulation of translational initiation"/>
    <property type="evidence" value="ECO:0000315"/>
    <property type="project" value="FlyBase"/>
</dbReference>
<dbReference type="GO" id="GO:0002949">
    <property type="term" value="P:tRNA threonylcarbamoyladenosine modification"/>
    <property type="evidence" value="ECO:0000315"/>
    <property type="project" value="FlyBase"/>
</dbReference>
<dbReference type="CDD" id="cd24132">
    <property type="entry name" value="ASKHA_NBD_OSGEP_like_euk"/>
    <property type="match status" value="1"/>
</dbReference>
<dbReference type="FunFam" id="3.30.420.40:FF:000141">
    <property type="entry name" value="Probable tRNA N6-adenosine threonylcarbamoyltransferase"/>
    <property type="match status" value="1"/>
</dbReference>
<dbReference type="FunFam" id="3.30.420.40:FF:000295">
    <property type="entry name" value="Probable tRNA N6-adenosine threonylcarbamoyltransferase"/>
    <property type="match status" value="1"/>
</dbReference>
<dbReference type="Gene3D" id="3.30.420.40">
    <property type="match status" value="2"/>
</dbReference>
<dbReference type="HAMAP" id="MF_01446">
    <property type="entry name" value="Kae1"/>
    <property type="match status" value="1"/>
</dbReference>
<dbReference type="InterPro" id="IPR043129">
    <property type="entry name" value="ATPase_NBD"/>
</dbReference>
<dbReference type="InterPro" id="IPR000905">
    <property type="entry name" value="Gcp-like_dom"/>
</dbReference>
<dbReference type="InterPro" id="IPR017861">
    <property type="entry name" value="KAE1/TsaD"/>
</dbReference>
<dbReference type="InterPro" id="IPR034680">
    <property type="entry name" value="Kae1_archaea_euk"/>
</dbReference>
<dbReference type="InterPro" id="IPR017860">
    <property type="entry name" value="Peptidase_M22_CS"/>
</dbReference>
<dbReference type="NCBIfam" id="TIGR03722">
    <property type="entry name" value="arch_KAE1"/>
    <property type="match status" value="1"/>
</dbReference>
<dbReference type="NCBIfam" id="TIGR00329">
    <property type="entry name" value="gcp_kae1"/>
    <property type="match status" value="1"/>
</dbReference>
<dbReference type="PANTHER" id="PTHR11735">
    <property type="entry name" value="TRNA N6-ADENOSINE THREONYLCARBAMOYLTRANSFERASE"/>
    <property type="match status" value="1"/>
</dbReference>
<dbReference type="PANTHER" id="PTHR11735:SF14">
    <property type="entry name" value="TRNA N6-ADENOSINE THREONYLCARBAMOYLTRANSFERASE"/>
    <property type="match status" value="1"/>
</dbReference>
<dbReference type="Pfam" id="PF00814">
    <property type="entry name" value="TsaD"/>
    <property type="match status" value="1"/>
</dbReference>
<dbReference type="PRINTS" id="PR00789">
    <property type="entry name" value="OSIALOPTASE"/>
</dbReference>
<dbReference type="SUPFAM" id="SSF53067">
    <property type="entry name" value="Actin-like ATPase domain"/>
    <property type="match status" value="1"/>
</dbReference>
<dbReference type="PROSITE" id="PS01016">
    <property type="entry name" value="GLYCOPROTEASE"/>
    <property type="match status" value="1"/>
</dbReference>
<evidence type="ECO:0000255" key="1">
    <source>
        <dbReference type="HAMAP-Rule" id="MF_03180"/>
    </source>
</evidence>
<evidence type="ECO:0000312" key="2">
    <source>
        <dbReference type="FlyBase" id="FBgn0283681"/>
    </source>
</evidence>
<proteinExistence type="evidence at transcript level"/>
<gene>
    <name evidence="2" type="primary">Tcs3</name>
    <name evidence="2" type="ORF">CG4933</name>
</gene>
<keyword id="KW-0012">Acyltransferase</keyword>
<keyword id="KW-0963">Cytoplasm</keyword>
<keyword id="KW-0479">Metal-binding</keyword>
<keyword id="KW-0539">Nucleus</keyword>
<keyword id="KW-1185">Reference proteome</keyword>
<keyword id="KW-0808">Transferase</keyword>
<keyword id="KW-0819">tRNA processing</keyword>
<comment type="function">
    <text evidence="1">Component of the EKC/KEOPS complex that is required for the formation of a threonylcarbamoyl group on adenosine at position 37 (t(6)A37) in tRNAs that read codons beginning with adenine. The complex is probably involved in the transfer of the threonylcarbamoyl moiety of threonylcarbamoyl-AMP (TC-AMP) to the N6 group of A37. Likely plays a direct catalytic role in this reaction, but requires other protein(s) of the complex to fulfill this activity.</text>
</comment>
<comment type="catalytic activity">
    <reaction evidence="1">
        <text>L-threonylcarbamoyladenylate + adenosine(37) in tRNA = N(6)-L-threonylcarbamoyladenosine(37) in tRNA + AMP + H(+)</text>
        <dbReference type="Rhea" id="RHEA:37059"/>
        <dbReference type="Rhea" id="RHEA-COMP:10162"/>
        <dbReference type="Rhea" id="RHEA-COMP:10163"/>
        <dbReference type="ChEBI" id="CHEBI:15378"/>
        <dbReference type="ChEBI" id="CHEBI:73682"/>
        <dbReference type="ChEBI" id="CHEBI:74411"/>
        <dbReference type="ChEBI" id="CHEBI:74418"/>
        <dbReference type="ChEBI" id="CHEBI:456215"/>
        <dbReference type="EC" id="2.3.1.234"/>
    </reaction>
</comment>
<comment type="cofactor">
    <cofactor evidence="1">
        <name>a divalent metal cation</name>
        <dbReference type="ChEBI" id="CHEBI:60240"/>
    </cofactor>
    <text evidence="1">Binds 1 divalent metal cation per subunit.</text>
</comment>
<comment type="subunit">
    <text evidence="1">Component of the EKC/KEOPS complex; the whole complex dimerizes.</text>
</comment>
<comment type="subcellular location">
    <subcellularLocation>
        <location evidence="1">Cytoplasm</location>
    </subcellularLocation>
    <subcellularLocation>
        <location evidence="1">Nucleus</location>
    </subcellularLocation>
</comment>
<comment type="similarity">
    <text evidence="1">Belongs to the KAE1 / TsaD family.</text>
</comment>
<protein>
    <recommendedName>
        <fullName evidence="1">Probable tRNA N6-adenosine threonylcarbamoyltransferase</fullName>
        <ecNumber evidence="1">2.3.1.234</ecNumber>
    </recommendedName>
    <alternativeName>
        <fullName>N6-L-threonylcarbamoyladenine synthase</fullName>
        <shortName>t(6)A synthase</shortName>
    </alternativeName>
    <alternativeName>
        <fullName evidence="1">t(6)A37 threonylcarbamoyladenosine biosynthesis protein Tcs3</fullName>
    </alternativeName>
    <alternativeName>
        <fullName evidence="1">tRNA threonylcarbamoyladenosine biosynthesis protein Tcs3</fullName>
    </alternativeName>
</protein>
<name>OSGEP_DROME</name>